<reference key="1">
    <citation type="journal article" date="2017" name="Genome Biol.">
        <title>Comparative genomics reveals high biological diversity and specific adaptations in the industrially and medically important fungal genus Aspergillus.</title>
        <authorList>
            <person name="de Vries R.P."/>
            <person name="Riley R."/>
            <person name="Wiebenga A."/>
            <person name="Aguilar-Osorio G."/>
            <person name="Amillis S."/>
            <person name="Uchima C.A."/>
            <person name="Anderluh G."/>
            <person name="Asadollahi M."/>
            <person name="Askin M."/>
            <person name="Barry K."/>
            <person name="Battaglia E."/>
            <person name="Bayram O."/>
            <person name="Benocci T."/>
            <person name="Braus-Stromeyer S.A."/>
            <person name="Caldana C."/>
            <person name="Canovas D."/>
            <person name="Cerqueira G.C."/>
            <person name="Chen F."/>
            <person name="Chen W."/>
            <person name="Choi C."/>
            <person name="Clum A."/>
            <person name="Dos Santos R.A."/>
            <person name="Damasio A.R."/>
            <person name="Diallinas G."/>
            <person name="Emri T."/>
            <person name="Fekete E."/>
            <person name="Flipphi M."/>
            <person name="Freyberg S."/>
            <person name="Gallo A."/>
            <person name="Gournas C."/>
            <person name="Habgood R."/>
            <person name="Hainaut M."/>
            <person name="Harispe M.L."/>
            <person name="Henrissat B."/>
            <person name="Hilden K.S."/>
            <person name="Hope R."/>
            <person name="Hossain A."/>
            <person name="Karabika E."/>
            <person name="Karaffa L."/>
            <person name="Karanyi Z."/>
            <person name="Krasevec N."/>
            <person name="Kuo A."/>
            <person name="Kusch H."/>
            <person name="LaButti K."/>
            <person name="Lagendijk E.L."/>
            <person name="Lapidus A."/>
            <person name="Levasseur A."/>
            <person name="Lindquist E."/>
            <person name="Lipzen A."/>
            <person name="Logrieco A.F."/>
            <person name="MacCabe A."/>
            <person name="Maekelae M.R."/>
            <person name="Malavazi I."/>
            <person name="Melin P."/>
            <person name="Meyer V."/>
            <person name="Mielnichuk N."/>
            <person name="Miskei M."/>
            <person name="Molnar A.P."/>
            <person name="Mule G."/>
            <person name="Ngan C.Y."/>
            <person name="Orejas M."/>
            <person name="Orosz E."/>
            <person name="Ouedraogo J.P."/>
            <person name="Overkamp K.M."/>
            <person name="Park H.-S."/>
            <person name="Perrone G."/>
            <person name="Piumi F."/>
            <person name="Punt P.J."/>
            <person name="Ram A.F."/>
            <person name="Ramon A."/>
            <person name="Rauscher S."/>
            <person name="Record E."/>
            <person name="Riano-Pachon D.M."/>
            <person name="Robert V."/>
            <person name="Roehrig J."/>
            <person name="Ruller R."/>
            <person name="Salamov A."/>
            <person name="Salih N.S."/>
            <person name="Samson R.A."/>
            <person name="Sandor E."/>
            <person name="Sanguinetti M."/>
            <person name="Schuetze T."/>
            <person name="Sepcic K."/>
            <person name="Shelest E."/>
            <person name="Sherlock G."/>
            <person name="Sophianopoulou V."/>
            <person name="Squina F.M."/>
            <person name="Sun H."/>
            <person name="Susca A."/>
            <person name="Todd R.B."/>
            <person name="Tsang A."/>
            <person name="Unkles S.E."/>
            <person name="van de Wiele N."/>
            <person name="van Rossen-Uffink D."/>
            <person name="Oliveira J.V."/>
            <person name="Vesth T.C."/>
            <person name="Visser J."/>
            <person name="Yu J.-H."/>
            <person name="Zhou M."/>
            <person name="Andersen M.R."/>
            <person name="Archer D.B."/>
            <person name="Baker S.E."/>
            <person name="Benoit I."/>
            <person name="Brakhage A.A."/>
            <person name="Braus G.H."/>
            <person name="Fischer R."/>
            <person name="Frisvad J.C."/>
            <person name="Goldman G.H."/>
            <person name="Houbraken J."/>
            <person name="Oakley B."/>
            <person name="Pocsi I."/>
            <person name="Scazzocchio C."/>
            <person name="Seiboth B."/>
            <person name="vanKuyk P.A."/>
            <person name="Wortman J."/>
            <person name="Dyer P.S."/>
            <person name="Grigoriev I.V."/>
        </authorList>
    </citation>
    <scope>NUCLEOTIDE SEQUENCE [LARGE SCALE GENOMIC DNA]</scope>
    <source>
        <strain>CBS 101740 / IMI 381727 / IBT 21946</strain>
    </source>
</reference>
<reference key="2">
    <citation type="journal article" date="2019" name="Biochemistry">
        <title>Biaryl-forming enzymes from Aspergilli exhibit substrate-dependent stereoselectivity.</title>
        <authorList>
            <person name="Obermaier S."/>
            <person name="Mueller M."/>
        </authorList>
    </citation>
    <scope>FUNCTION</scope>
    <scope>PATHWAY</scope>
</reference>
<protein>
    <recommendedName>
        <fullName evidence="3">O-methyltransferase bfoE</fullName>
        <ecNumber evidence="4">2.1.1.-</ecNumber>
    </recommendedName>
    <alternativeName>
        <fullName evidence="3">Bifonsecin B biosynthesis cluster protein E</fullName>
    </alternativeName>
</protein>
<keyword id="KW-0489">Methyltransferase</keyword>
<keyword id="KW-1185">Reference proteome</keyword>
<keyword id="KW-0949">S-adenosyl-L-methionine</keyword>
<keyword id="KW-0808">Transferase</keyword>
<name>BFOE_ASPBC</name>
<evidence type="ECO:0000255" key="1">
    <source>
        <dbReference type="PROSITE-ProRule" id="PRU01020"/>
    </source>
</evidence>
<evidence type="ECO:0000269" key="2">
    <source>
    </source>
</evidence>
<evidence type="ECO:0000303" key="3">
    <source>
    </source>
</evidence>
<evidence type="ECO:0000305" key="4">
    <source>
    </source>
</evidence>
<sequence>MTAAQNAPIPEAGKKVMSTVTLAPALGFVPVAVHFDLFGCLQEIGKPATAQDVCNIHRTRYGDTNLSVSLANDTLFLMGGLGFLDLLPDDVYQANDVTRYLVDTPSAQHGAMHFTSEGLLASAFLMRRLMDTNFEYPFQECDTPFQYAYKLMGNDSLAREHVYSVMHHTGRLDSFNTFMTGKFGRWGTMPDRVRKLGYDLDGLMQSTAPEKLRIVDIGGGRGELLLEMQAAYPHLLQKENLVLQEYNADIGVVPKVTEMAWNYKEDASEQPVKGALLYSMAHVLHNLSDIESIKLLAKVARVMAPTSRLLIQEFTKNAASSTTHAAMILMHAGRERTRAEWRDLAAFAGLEITFEAYPPNGECLVEMRKVLN</sequence>
<proteinExistence type="inferred from homology"/>
<organism>
    <name type="scientific">Aspergillus brasiliensis (strain CBS 101740 / IMI 381727 / IBT 21946)</name>
    <dbReference type="NCBI Taxonomy" id="767769"/>
    <lineage>
        <taxon>Eukaryota</taxon>
        <taxon>Fungi</taxon>
        <taxon>Dikarya</taxon>
        <taxon>Ascomycota</taxon>
        <taxon>Pezizomycotina</taxon>
        <taxon>Eurotiomycetes</taxon>
        <taxon>Eurotiomycetidae</taxon>
        <taxon>Eurotiales</taxon>
        <taxon>Aspergillaceae</taxon>
        <taxon>Aspergillus</taxon>
        <taxon>Aspergillus subgen. Circumdati</taxon>
    </lineage>
</organism>
<accession>A0A1L9URE0</accession>
<gene>
    <name evidence="3" type="primary">bfoE</name>
    <name type="ORF">ASPBRDRAFT_438143</name>
</gene>
<dbReference type="EC" id="2.1.1.-" evidence="4"/>
<dbReference type="EMBL" id="KV878681">
    <property type="protein sequence ID" value="OJJ74126.1"/>
    <property type="molecule type" value="Genomic_DNA"/>
</dbReference>
<dbReference type="SMR" id="A0A1L9URE0"/>
<dbReference type="VEuPathDB" id="FungiDB:ASPBRDRAFT_438143"/>
<dbReference type="OMA" id="THAAMIV"/>
<dbReference type="OrthoDB" id="1535081at2759"/>
<dbReference type="Proteomes" id="UP000184499">
    <property type="component" value="Unassembled WGS sequence"/>
</dbReference>
<dbReference type="GO" id="GO:0008171">
    <property type="term" value="F:O-methyltransferase activity"/>
    <property type="evidence" value="ECO:0007669"/>
    <property type="project" value="InterPro"/>
</dbReference>
<dbReference type="GO" id="GO:0032259">
    <property type="term" value="P:methylation"/>
    <property type="evidence" value="ECO:0007669"/>
    <property type="project" value="UniProtKB-KW"/>
</dbReference>
<dbReference type="GO" id="GO:0044550">
    <property type="term" value="P:secondary metabolite biosynthetic process"/>
    <property type="evidence" value="ECO:0007669"/>
    <property type="project" value="UniProtKB-ARBA"/>
</dbReference>
<dbReference type="Gene3D" id="3.40.50.150">
    <property type="entry name" value="Vaccinia Virus protein VP39"/>
    <property type="match status" value="1"/>
</dbReference>
<dbReference type="InterPro" id="IPR016461">
    <property type="entry name" value="COMT-like"/>
</dbReference>
<dbReference type="InterPro" id="IPR001077">
    <property type="entry name" value="O_MeTrfase_dom"/>
</dbReference>
<dbReference type="InterPro" id="IPR029063">
    <property type="entry name" value="SAM-dependent_MTases_sf"/>
</dbReference>
<dbReference type="PANTHER" id="PTHR43712:SF18">
    <property type="entry name" value="PUTATIVE (AFU_ORTHOLOGUE AFUA_4G14240)-RELATED"/>
    <property type="match status" value="1"/>
</dbReference>
<dbReference type="PANTHER" id="PTHR43712">
    <property type="entry name" value="PUTATIVE (AFU_ORTHOLOGUE AFUA_4G14580)-RELATED"/>
    <property type="match status" value="1"/>
</dbReference>
<dbReference type="Pfam" id="PF00891">
    <property type="entry name" value="Methyltransf_2"/>
    <property type="match status" value="1"/>
</dbReference>
<dbReference type="SUPFAM" id="SSF53335">
    <property type="entry name" value="S-adenosyl-L-methionine-dependent methyltransferases"/>
    <property type="match status" value="1"/>
</dbReference>
<dbReference type="PROSITE" id="PS51683">
    <property type="entry name" value="SAM_OMT_II"/>
    <property type="match status" value="1"/>
</dbReference>
<feature type="chain" id="PRO_0000448927" description="O-methyltransferase bfoE">
    <location>
        <begin position="1"/>
        <end position="372"/>
    </location>
</feature>
<feature type="active site" description="Proton acceptor" evidence="1">
    <location>
        <position position="285"/>
    </location>
</feature>
<feature type="binding site" evidence="1">
    <location>
        <position position="186"/>
    </location>
    <ligand>
        <name>S-adenosyl-L-methionine</name>
        <dbReference type="ChEBI" id="CHEBI:59789"/>
    </ligand>
</feature>
<comment type="function">
    <text evidence="2 4">Cytochrome P450 monooxygenase; part of the gene cluster that mediates the biosynthesis of bifonsecin B, a dimeric gamma-naphthopyrone (PubMed:31067027). The first step in the biosynthesis of bifonsecin B is the production of gamma-naphthopyrone precursor YWA1 by the non-reducing polyketide synthase albA, via condensation of one acetyl-CoA starter unit with 6 malonyl-CoA units (PubMed:31067027). YWA1 is then methylated by bfoE at position C-6 to yield foncesin which is further methylated at position C-8 by bfoD to produce fonsecin B (Probable). A key enzyme in the biosynthetic pathway is the cytochrome P450 monooxygenase bfoB which catalyzes the oxidative dimerization of fonsecin B to bifonsecin B (PubMed:31067027). Bfob also catalyzes the oxidative dimerization of rubrofusarin B into nigerone (PubMed:31067027). The stereoselectivity of bfoB is influenced by the two natural monomeric substrates; homodimerization of fonsecin B yields a stereochemically pure biaryl, M-foncerine B, while rubrofusarin B yields a mixture of enantiomers M- and P-nigerone (PubMed:31067027).</text>
</comment>
<comment type="pathway">
    <text evidence="4">Secondary metabolite biosynthesis.</text>
</comment>
<comment type="similarity">
    <text evidence="1">Belongs to the class I-like SAM-binding methyltransferase superfamily. Cation-independent O-methyltransferase family.</text>
</comment>